<keyword id="KW-1015">Disulfide bond</keyword>
<keyword id="KW-0249">Electron transport</keyword>
<keyword id="KW-0472">Membrane</keyword>
<keyword id="KW-0496">Mitochondrion</keyword>
<keyword id="KW-0999">Mitochondrion inner membrane</keyword>
<keyword id="KW-1185">Reference proteome</keyword>
<keyword id="KW-0679">Respiratory chain</keyword>
<keyword id="KW-0813">Transport</keyword>
<name>NDUB7_CAEEL</name>
<gene>
    <name evidence="5" type="primary">ndub-7</name>
    <name evidence="5" type="ORF">D2030.4</name>
</gene>
<evidence type="ECO:0000250" key="1"/>
<evidence type="ECO:0000255" key="2">
    <source>
        <dbReference type="PROSITE-ProRule" id="PRU01150"/>
    </source>
</evidence>
<evidence type="ECO:0000256" key="3">
    <source>
        <dbReference type="SAM" id="MobiDB-lite"/>
    </source>
</evidence>
<evidence type="ECO:0000305" key="4"/>
<evidence type="ECO:0000312" key="5">
    <source>
        <dbReference type="WormBase" id="D2030.4"/>
    </source>
</evidence>
<proteinExistence type="inferred from homology"/>
<reference key="1">
    <citation type="journal article" date="1998" name="Science">
        <title>Genome sequence of the nematode C. elegans: a platform for investigating biology.</title>
        <authorList>
            <consortium name="The C. elegans sequencing consortium"/>
        </authorList>
    </citation>
    <scope>NUCLEOTIDE SEQUENCE [LARGE SCALE GENOMIC DNA]</scope>
    <source>
        <strain>Bristol N2</strain>
    </source>
</reference>
<feature type="chain" id="PRO_0000118813" description="NADH dehydrogenase [ubiquinone] 1 beta subcomplex subunit 7">
    <location>
        <begin position="1"/>
        <end position="123"/>
    </location>
</feature>
<feature type="domain" description="CHCH" evidence="2">
    <location>
        <begin position="59"/>
        <end position="102"/>
    </location>
</feature>
<feature type="region of interest" description="Disordered" evidence="3">
    <location>
        <begin position="1"/>
        <end position="32"/>
    </location>
</feature>
<feature type="short sequence motif" description="Cx9C motif 1" evidence="2">
    <location>
        <begin position="62"/>
        <end position="72"/>
    </location>
</feature>
<feature type="short sequence motif" description="Cx9C motif 2" evidence="2">
    <location>
        <begin position="84"/>
        <end position="94"/>
    </location>
</feature>
<feature type="disulfide bond" evidence="2">
    <location>
        <begin position="62"/>
        <end position="94"/>
    </location>
</feature>
<feature type="disulfide bond" evidence="2">
    <location>
        <begin position="72"/>
        <end position="84"/>
    </location>
</feature>
<comment type="function">
    <text evidence="1">Accessory subunit of the mitochondrial membrane respiratory chain NADH dehydrogenase (Complex I), that is believed not to be involved in catalysis. Complex I functions in the transfer of electrons from NADH to the respiratory chain. The immediate electron acceptor for the enzyme is believed to be ubiquinone (By similarity).</text>
</comment>
<comment type="subunit">
    <text evidence="1">Complex I is composed of 45 different subunits.</text>
</comment>
<comment type="subcellular location">
    <subcellularLocation>
        <location evidence="1">Mitochondrion</location>
    </subcellularLocation>
    <subcellularLocation>
        <location evidence="1">Mitochondrion inner membrane</location>
        <topology evidence="1">Peripheral membrane protein</topology>
    </subcellularLocation>
    <subcellularLocation>
        <location evidence="1">Mitochondrion intermembrane space</location>
    </subcellularLocation>
</comment>
<comment type="domain">
    <text evidence="1">Contains two C-X9-C motifs that are predicted to form a helix-coil-helix structure, permitting the formation of intramolecular disulfide bonds.</text>
</comment>
<comment type="similarity">
    <text evidence="4">Belongs to the complex I NDUFB7 subunit family.</text>
</comment>
<dbReference type="EMBL" id="Z73906">
    <property type="protein sequence ID" value="CAA98116.1"/>
    <property type="molecule type" value="Genomic_DNA"/>
</dbReference>
<dbReference type="PIR" id="T20354">
    <property type="entry name" value="T20354"/>
</dbReference>
<dbReference type="SMR" id="P90789"/>
<dbReference type="BioGRID" id="37955">
    <property type="interactions" value="65"/>
</dbReference>
<dbReference type="FunCoup" id="P90789">
    <property type="interactions" value="2202"/>
</dbReference>
<dbReference type="STRING" id="6239.D2030.4.1"/>
<dbReference type="PaxDb" id="6239-D2030.4"/>
<dbReference type="PeptideAtlas" id="P90789"/>
<dbReference type="EnsemblMetazoa" id="D2030.4.1">
    <property type="protein sequence ID" value="D2030.4.1"/>
    <property type="gene ID" value="WBGene00008414"/>
</dbReference>
<dbReference type="KEGG" id="cel:CELE_D2030.4"/>
<dbReference type="UCSC" id="D2030.4.1">
    <property type="organism name" value="c. elegans"/>
</dbReference>
<dbReference type="AGR" id="WB:WBGene00008414"/>
<dbReference type="CTD" id="172513"/>
<dbReference type="WormBase" id="D2030.4">
    <property type="protein sequence ID" value="CE09081"/>
    <property type="gene ID" value="WBGene00008414"/>
    <property type="gene designation" value="ndub-7"/>
</dbReference>
<dbReference type="eggNOG" id="KOG3468">
    <property type="taxonomic scope" value="Eukaryota"/>
</dbReference>
<dbReference type="GeneTree" id="ENSGT00390000018759"/>
<dbReference type="HOGENOM" id="CLU_154847_1_0_1"/>
<dbReference type="InParanoid" id="P90789"/>
<dbReference type="OMA" id="FVYQCAH"/>
<dbReference type="OrthoDB" id="268414at2759"/>
<dbReference type="PhylomeDB" id="P90789"/>
<dbReference type="PRO" id="PR:P90789"/>
<dbReference type="Proteomes" id="UP000001940">
    <property type="component" value="Chromosome I"/>
</dbReference>
<dbReference type="Bgee" id="WBGene00008414">
    <property type="expression patterns" value="Expressed in pharyngeal muscle cell (C elegans) and 4 other cell types or tissues"/>
</dbReference>
<dbReference type="GO" id="GO:0005743">
    <property type="term" value="C:mitochondrial inner membrane"/>
    <property type="evidence" value="ECO:0007669"/>
    <property type="project" value="UniProtKB-SubCell"/>
</dbReference>
<dbReference type="GO" id="GO:0005758">
    <property type="term" value="C:mitochondrial intermembrane space"/>
    <property type="evidence" value="ECO:0007669"/>
    <property type="project" value="UniProtKB-SubCell"/>
</dbReference>
<dbReference type="GO" id="GO:0045271">
    <property type="term" value="C:respiratory chain complex I"/>
    <property type="evidence" value="ECO:0000318"/>
    <property type="project" value="GO_Central"/>
</dbReference>
<dbReference type="InterPro" id="IPR008698">
    <property type="entry name" value="NDUB7"/>
</dbReference>
<dbReference type="PANTHER" id="PTHR20900:SF0">
    <property type="entry name" value="NADH DEHYDROGENASE [UBIQUINONE] 1 BETA SUBCOMPLEX SUBUNIT 7"/>
    <property type="match status" value="1"/>
</dbReference>
<dbReference type="PANTHER" id="PTHR20900">
    <property type="entry name" value="NADH:UBIQUINONE OXIDOREDUCTASE B18-LIKE SUBUNIT"/>
    <property type="match status" value="1"/>
</dbReference>
<dbReference type="Pfam" id="PF05676">
    <property type="entry name" value="NDUF_B7"/>
    <property type="match status" value="1"/>
</dbReference>
<dbReference type="PROSITE" id="PS51808">
    <property type="entry name" value="CHCH"/>
    <property type="match status" value="1"/>
</dbReference>
<protein>
    <recommendedName>
        <fullName>NADH dehydrogenase [ubiquinone] 1 beta subcomplex subunit 7</fullName>
    </recommendedName>
</protein>
<sequence length="123" mass="14408">MGTKLSVSLEGASTPETAPRVDRPPTFDPQYGFERPRKVREMKATWEEMEQWKLKPAQRDYCAHHLISLMKCQTQNAPFAGHACDGERGAWDKCEYDDHIMRIKEFERERRLLQRQARKEATA</sequence>
<organism>
    <name type="scientific">Caenorhabditis elegans</name>
    <dbReference type="NCBI Taxonomy" id="6239"/>
    <lineage>
        <taxon>Eukaryota</taxon>
        <taxon>Metazoa</taxon>
        <taxon>Ecdysozoa</taxon>
        <taxon>Nematoda</taxon>
        <taxon>Chromadorea</taxon>
        <taxon>Rhabditida</taxon>
        <taxon>Rhabditina</taxon>
        <taxon>Rhabditomorpha</taxon>
        <taxon>Rhabditoidea</taxon>
        <taxon>Rhabditidae</taxon>
        <taxon>Peloderinae</taxon>
        <taxon>Caenorhabditis</taxon>
    </lineage>
</organism>
<accession>P90789</accession>